<sequence>MVLKDNVIDNWANALTKIAVKENKVKKMLEQAHVLIEVLKNKNEFVDILTFKSAHDEEKRIKIIDDTFSQFNIDEDIMNAFKILVHMQAFVNARDILKKLRGKLVELDNMTYGVVWSTEEISAAQIKEIEEKMSKKINKEVKLVNKIDTKLIAGIQVVVHNKVYDGSLRSKLDEMKYQVLKEK</sequence>
<organism>
    <name type="scientific">Mesoplasma florum (strain ATCC 33453 / NBRC 100688 / NCTC 11704 / L1)</name>
    <name type="common">Acholeplasma florum</name>
    <dbReference type="NCBI Taxonomy" id="265311"/>
    <lineage>
        <taxon>Bacteria</taxon>
        <taxon>Bacillati</taxon>
        <taxon>Mycoplasmatota</taxon>
        <taxon>Mollicutes</taxon>
        <taxon>Entomoplasmatales</taxon>
        <taxon>Entomoplasmataceae</taxon>
        <taxon>Mesoplasma</taxon>
    </lineage>
</organism>
<feature type="chain" id="PRO_0000382121" description="ATP synthase subunit delta">
    <location>
        <begin position="1"/>
        <end position="183"/>
    </location>
</feature>
<protein>
    <recommendedName>
        <fullName evidence="1">ATP synthase subunit delta</fullName>
    </recommendedName>
    <alternativeName>
        <fullName evidence="1">ATP synthase F(1) sector subunit delta</fullName>
    </alternativeName>
    <alternativeName>
        <fullName evidence="1">F-type ATPase subunit delta</fullName>
        <shortName evidence="1">F-ATPase subunit delta</shortName>
    </alternativeName>
</protein>
<name>ATPD_MESFL</name>
<proteinExistence type="inferred from homology"/>
<comment type="function">
    <text evidence="1">F(1)F(0) ATP synthase produces ATP from ADP in the presence of a proton or sodium gradient. F-type ATPases consist of two structural domains, F(1) containing the extramembraneous catalytic core and F(0) containing the membrane proton channel, linked together by a central stalk and a peripheral stalk. During catalysis, ATP synthesis in the catalytic domain of F(1) is coupled via a rotary mechanism of the central stalk subunits to proton translocation.</text>
</comment>
<comment type="function">
    <text evidence="1">This protein is part of the stalk that links CF(0) to CF(1). It either transmits conformational changes from CF(0) to CF(1) or is implicated in proton conduction.</text>
</comment>
<comment type="subunit">
    <text evidence="1">F-type ATPases have 2 components, F(1) - the catalytic core - and F(0) - the membrane proton channel. F(1) has five subunits: alpha(3), beta(3), gamma(1), delta(1), epsilon(1). F(0) has three main subunits: a(1), b(2) and c(10-14). The alpha and beta chains form an alternating ring which encloses part of the gamma chain. F(1) is attached to F(0) by a central stalk formed by the gamma and epsilon chains, while a peripheral stalk is formed by the delta and b chains.</text>
</comment>
<comment type="subcellular location">
    <subcellularLocation>
        <location evidence="1">Cell membrane</location>
        <topology evidence="1">Peripheral membrane protein</topology>
    </subcellularLocation>
</comment>
<comment type="similarity">
    <text evidence="1">Belongs to the ATPase delta chain family.</text>
</comment>
<evidence type="ECO:0000255" key="1">
    <source>
        <dbReference type="HAMAP-Rule" id="MF_01416"/>
    </source>
</evidence>
<dbReference type="EMBL" id="AE017263">
    <property type="protein sequence ID" value="AAT75468.1"/>
    <property type="molecule type" value="Genomic_DNA"/>
</dbReference>
<dbReference type="RefSeq" id="WP_011183009.1">
    <property type="nucleotide sequence ID" value="NC_006055.1"/>
</dbReference>
<dbReference type="RefSeq" id="YP_053352.1">
    <property type="nucleotide sequence ID" value="NC_006055.1"/>
</dbReference>
<dbReference type="SMR" id="Q6F205"/>
<dbReference type="STRING" id="265311.Mfl112"/>
<dbReference type="PaxDb" id="265311-Mfl112"/>
<dbReference type="EnsemblBacteria" id="AAT75468">
    <property type="protein sequence ID" value="AAT75468"/>
    <property type="gene ID" value="Mfl112"/>
</dbReference>
<dbReference type="GeneID" id="2897979"/>
<dbReference type="KEGG" id="mfl:Mfl112"/>
<dbReference type="PATRIC" id="fig|265311.5.peg.113"/>
<dbReference type="eggNOG" id="COG0712">
    <property type="taxonomic scope" value="Bacteria"/>
</dbReference>
<dbReference type="HOGENOM" id="CLU_085114_4_2_14"/>
<dbReference type="OrthoDB" id="389095at2"/>
<dbReference type="Proteomes" id="UP000006647">
    <property type="component" value="Chromosome"/>
</dbReference>
<dbReference type="GO" id="GO:0005886">
    <property type="term" value="C:plasma membrane"/>
    <property type="evidence" value="ECO:0007669"/>
    <property type="project" value="UniProtKB-SubCell"/>
</dbReference>
<dbReference type="GO" id="GO:0045259">
    <property type="term" value="C:proton-transporting ATP synthase complex"/>
    <property type="evidence" value="ECO:0007669"/>
    <property type="project" value="UniProtKB-KW"/>
</dbReference>
<dbReference type="GO" id="GO:0046933">
    <property type="term" value="F:proton-transporting ATP synthase activity, rotational mechanism"/>
    <property type="evidence" value="ECO:0007669"/>
    <property type="project" value="UniProtKB-UniRule"/>
</dbReference>
<dbReference type="Gene3D" id="1.10.520.20">
    <property type="entry name" value="N-terminal domain of the delta subunit of the F1F0-ATP synthase"/>
    <property type="match status" value="1"/>
</dbReference>
<dbReference type="HAMAP" id="MF_01416">
    <property type="entry name" value="ATP_synth_delta_bact"/>
    <property type="match status" value="1"/>
</dbReference>
<dbReference type="InterPro" id="IPR026015">
    <property type="entry name" value="ATP_synth_OSCP/delta_N_sf"/>
</dbReference>
<dbReference type="InterPro" id="IPR000711">
    <property type="entry name" value="ATPase_OSCP/dsu"/>
</dbReference>
<dbReference type="NCBIfam" id="TIGR01145">
    <property type="entry name" value="ATP_synt_delta"/>
    <property type="match status" value="1"/>
</dbReference>
<dbReference type="NCBIfam" id="NF009975">
    <property type="entry name" value="PRK13436.1"/>
    <property type="match status" value="1"/>
</dbReference>
<dbReference type="PANTHER" id="PTHR11910">
    <property type="entry name" value="ATP SYNTHASE DELTA CHAIN"/>
    <property type="match status" value="1"/>
</dbReference>
<dbReference type="Pfam" id="PF00213">
    <property type="entry name" value="OSCP"/>
    <property type="match status" value="1"/>
</dbReference>
<dbReference type="PRINTS" id="PR00125">
    <property type="entry name" value="ATPASEDELTA"/>
</dbReference>
<dbReference type="SUPFAM" id="SSF47928">
    <property type="entry name" value="N-terminal domain of the delta subunit of the F1F0-ATP synthase"/>
    <property type="match status" value="1"/>
</dbReference>
<accession>Q6F205</accession>
<gene>
    <name evidence="1" type="primary">atpH</name>
    <name type="ordered locus">Mfl112</name>
</gene>
<keyword id="KW-0066">ATP synthesis</keyword>
<keyword id="KW-1003">Cell membrane</keyword>
<keyword id="KW-0139">CF(1)</keyword>
<keyword id="KW-0375">Hydrogen ion transport</keyword>
<keyword id="KW-0406">Ion transport</keyword>
<keyword id="KW-0472">Membrane</keyword>
<keyword id="KW-1185">Reference proteome</keyword>
<keyword id="KW-0813">Transport</keyword>
<reference key="1">
    <citation type="submission" date="2004-06" db="EMBL/GenBank/DDBJ databases">
        <authorList>
            <person name="Birren B.W."/>
            <person name="Stange-Thomann N."/>
            <person name="Hafez N."/>
            <person name="DeCaprio D."/>
            <person name="Fisher S."/>
            <person name="Butler J."/>
            <person name="Elkins T."/>
            <person name="Kodira C.D."/>
            <person name="Major J."/>
            <person name="Wang S."/>
            <person name="Nicol R."/>
            <person name="Nusbaum C."/>
        </authorList>
    </citation>
    <scope>NUCLEOTIDE SEQUENCE [LARGE SCALE GENOMIC DNA]</scope>
    <source>
        <strain>ATCC 33453 / NBRC 100688 / NCTC 11704 / L1</strain>
    </source>
</reference>